<comment type="function">
    <text evidence="1">Catalyzes the formation of pyridoxal 5'-phosphate from ribose 5-phosphate (RBP), glyceraldehyde 3-phosphate (G3P) and ammonia. The ammonia is provided by the PdxT subunit. Can also use ribulose 5-phosphate and dihydroxyacetone phosphate as substrates, resulting from enzyme-catalyzed isomerization of RBP and G3P, respectively.</text>
</comment>
<comment type="catalytic activity">
    <reaction evidence="1">
        <text>aldehydo-D-ribose 5-phosphate + D-glyceraldehyde 3-phosphate + L-glutamine = pyridoxal 5'-phosphate + L-glutamate + phosphate + 3 H2O + H(+)</text>
        <dbReference type="Rhea" id="RHEA:31507"/>
        <dbReference type="ChEBI" id="CHEBI:15377"/>
        <dbReference type="ChEBI" id="CHEBI:15378"/>
        <dbReference type="ChEBI" id="CHEBI:29985"/>
        <dbReference type="ChEBI" id="CHEBI:43474"/>
        <dbReference type="ChEBI" id="CHEBI:58273"/>
        <dbReference type="ChEBI" id="CHEBI:58359"/>
        <dbReference type="ChEBI" id="CHEBI:59776"/>
        <dbReference type="ChEBI" id="CHEBI:597326"/>
        <dbReference type="EC" id="4.3.3.6"/>
    </reaction>
</comment>
<comment type="pathway">
    <text evidence="1">Cofactor biosynthesis; pyridoxal 5'-phosphate biosynthesis.</text>
</comment>
<comment type="subunit">
    <text evidence="1">In the presence of PdxT, forms a dodecamer of heterodimers.</text>
</comment>
<comment type="similarity">
    <text evidence="1">Belongs to the PdxS/SNZ family.</text>
</comment>
<organism>
    <name type="scientific">Actinobacillus pleuropneumoniae serotype 7 (strain AP76)</name>
    <dbReference type="NCBI Taxonomy" id="537457"/>
    <lineage>
        <taxon>Bacteria</taxon>
        <taxon>Pseudomonadati</taxon>
        <taxon>Pseudomonadota</taxon>
        <taxon>Gammaproteobacteria</taxon>
        <taxon>Pasteurellales</taxon>
        <taxon>Pasteurellaceae</taxon>
        <taxon>Actinobacillus</taxon>
    </lineage>
</organism>
<protein>
    <recommendedName>
        <fullName evidence="1">Pyridoxal 5'-phosphate synthase subunit PdxS</fullName>
        <shortName evidence="1">PLP synthase subunit PdxS</shortName>
        <ecNumber evidence="1">4.3.3.6</ecNumber>
    </recommendedName>
    <alternativeName>
        <fullName evidence="1">Pdx1</fullName>
    </alternativeName>
</protein>
<evidence type="ECO:0000255" key="1">
    <source>
        <dbReference type="HAMAP-Rule" id="MF_01824"/>
    </source>
</evidence>
<accession>B3GXB6</accession>
<reference key="1">
    <citation type="submission" date="2008-06" db="EMBL/GenBank/DDBJ databases">
        <title>Genome and proteome analysis of A. pleuropneumoniae serotype 7.</title>
        <authorList>
            <person name="Linke B."/>
            <person name="Buettner F."/>
            <person name="Martinez-Arias R."/>
            <person name="Goesmann A."/>
            <person name="Baltes N."/>
            <person name="Tegetmeyer H."/>
            <person name="Singh M."/>
            <person name="Gerlach G.F."/>
        </authorList>
    </citation>
    <scope>NUCLEOTIDE SEQUENCE [LARGE SCALE GENOMIC DNA]</scope>
    <source>
        <strain>AP76</strain>
    </source>
</reference>
<name>PDXS_ACTP7</name>
<proteinExistence type="inferred from homology"/>
<gene>
    <name evidence="1" type="primary">pdxS</name>
    <name type="ordered locus">APP7_0616</name>
</gene>
<dbReference type="EC" id="4.3.3.6" evidence="1"/>
<dbReference type="EMBL" id="CP001091">
    <property type="protein sequence ID" value="ACE61268.1"/>
    <property type="molecule type" value="Genomic_DNA"/>
</dbReference>
<dbReference type="RefSeq" id="WP_005617074.1">
    <property type="nucleotide sequence ID" value="NC_010939.1"/>
</dbReference>
<dbReference type="SMR" id="B3GXB6"/>
<dbReference type="KEGG" id="apa:APP7_0616"/>
<dbReference type="HOGENOM" id="CLU_055352_1_0_6"/>
<dbReference type="UniPathway" id="UPA00245"/>
<dbReference type="PHI-base" id="PHI:7075"/>
<dbReference type="Proteomes" id="UP000001226">
    <property type="component" value="Chromosome"/>
</dbReference>
<dbReference type="GO" id="GO:0036381">
    <property type="term" value="F:pyridoxal 5'-phosphate synthase (glutamine hydrolysing) activity"/>
    <property type="evidence" value="ECO:0007669"/>
    <property type="project" value="UniProtKB-UniRule"/>
</dbReference>
<dbReference type="GO" id="GO:0006520">
    <property type="term" value="P:amino acid metabolic process"/>
    <property type="evidence" value="ECO:0007669"/>
    <property type="project" value="TreeGrafter"/>
</dbReference>
<dbReference type="GO" id="GO:0042823">
    <property type="term" value="P:pyridoxal phosphate biosynthetic process"/>
    <property type="evidence" value="ECO:0007669"/>
    <property type="project" value="UniProtKB-UniRule"/>
</dbReference>
<dbReference type="GO" id="GO:0008615">
    <property type="term" value="P:pyridoxine biosynthetic process"/>
    <property type="evidence" value="ECO:0007669"/>
    <property type="project" value="TreeGrafter"/>
</dbReference>
<dbReference type="CDD" id="cd04727">
    <property type="entry name" value="pdxS"/>
    <property type="match status" value="1"/>
</dbReference>
<dbReference type="FunFam" id="3.20.20.70:FF:000001">
    <property type="entry name" value="Pyridoxine biosynthesis protein PDX1"/>
    <property type="match status" value="1"/>
</dbReference>
<dbReference type="Gene3D" id="3.20.20.70">
    <property type="entry name" value="Aldolase class I"/>
    <property type="match status" value="1"/>
</dbReference>
<dbReference type="HAMAP" id="MF_01824">
    <property type="entry name" value="PdxS"/>
    <property type="match status" value="1"/>
</dbReference>
<dbReference type="InterPro" id="IPR013785">
    <property type="entry name" value="Aldolase_TIM"/>
</dbReference>
<dbReference type="InterPro" id="IPR001852">
    <property type="entry name" value="PdxS/SNZ"/>
</dbReference>
<dbReference type="InterPro" id="IPR033755">
    <property type="entry name" value="PdxS/SNZ_N"/>
</dbReference>
<dbReference type="InterPro" id="IPR011060">
    <property type="entry name" value="RibuloseP-bd_barrel"/>
</dbReference>
<dbReference type="NCBIfam" id="NF003215">
    <property type="entry name" value="PRK04180.1"/>
    <property type="match status" value="1"/>
</dbReference>
<dbReference type="NCBIfam" id="TIGR00343">
    <property type="entry name" value="pyridoxal 5'-phosphate synthase lyase subunit PdxS"/>
    <property type="match status" value="1"/>
</dbReference>
<dbReference type="PANTHER" id="PTHR31829">
    <property type="entry name" value="PYRIDOXAL 5'-PHOSPHATE SYNTHASE SUBUNIT SNZ1-RELATED"/>
    <property type="match status" value="1"/>
</dbReference>
<dbReference type="PANTHER" id="PTHR31829:SF0">
    <property type="entry name" value="PYRIDOXAL 5'-PHOSPHATE SYNTHASE SUBUNIT SNZ1-RELATED"/>
    <property type="match status" value="1"/>
</dbReference>
<dbReference type="Pfam" id="PF01680">
    <property type="entry name" value="SOR_SNZ"/>
    <property type="match status" value="1"/>
</dbReference>
<dbReference type="PIRSF" id="PIRSF029271">
    <property type="entry name" value="Pdx1"/>
    <property type="match status" value="1"/>
</dbReference>
<dbReference type="SUPFAM" id="SSF51366">
    <property type="entry name" value="Ribulose-phoshate binding barrel"/>
    <property type="match status" value="1"/>
</dbReference>
<dbReference type="PROSITE" id="PS01235">
    <property type="entry name" value="PDXS_SNZ_1"/>
    <property type="match status" value="1"/>
</dbReference>
<dbReference type="PROSITE" id="PS51129">
    <property type="entry name" value="PDXS_SNZ_2"/>
    <property type="match status" value="1"/>
</dbReference>
<keyword id="KW-0456">Lyase</keyword>
<keyword id="KW-0663">Pyridoxal phosphate</keyword>
<keyword id="KW-0704">Schiff base</keyword>
<sequence>MTKILGSDPVKRGMAQMQKGGVIMDVVNAEQARIAEAAGAVAVMALERVPSDIRAAGGVARMANTTIVREVMEAVSIPVMAKARIGHIVEARVLEAMGVDYIDESEVLTPADEEFHLLKSDYTVPFVCGCRDLGEALRRIGEGASMLRTKGEPGTGNVVEAVRHLRKVNAQLRKVINMSHDELMTEAKYLGAPFELLLQIKTLGKLPVVNFAAGGIATPADAALMMELGADGVFVGSGIFKSENPEKFAKAIVQATTHYQDYDLIARLSADLGEPMRGVEISELAVQDRMQERGW</sequence>
<feature type="chain" id="PRO_1000188201" description="Pyridoxal 5'-phosphate synthase subunit PdxS">
    <location>
        <begin position="1"/>
        <end position="295"/>
    </location>
</feature>
<feature type="active site" description="Schiff-base intermediate with D-ribose 5-phosphate" evidence="1">
    <location>
        <position position="82"/>
    </location>
</feature>
<feature type="binding site" evidence="1">
    <location>
        <position position="25"/>
    </location>
    <ligand>
        <name>D-ribose 5-phosphate</name>
        <dbReference type="ChEBI" id="CHEBI:78346"/>
    </ligand>
</feature>
<feature type="binding site" evidence="1">
    <location>
        <position position="154"/>
    </location>
    <ligand>
        <name>D-ribose 5-phosphate</name>
        <dbReference type="ChEBI" id="CHEBI:78346"/>
    </ligand>
</feature>
<feature type="binding site" evidence="1">
    <location>
        <position position="166"/>
    </location>
    <ligand>
        <name>D-glyceraldehyde 3-phosphate</name>
        <dbReference type="ChEBI" id="CHEBI:59776"/>
    </ligand>
</feature>
<feature type="binding site" evidence="1">
    <location>
        <position position="215"/>
    </location>
    <ligand>
        <name>D-ribose 5-phosphate</name>
        <dbReference type="ChEBI" id="CHEBI:78346"/>
    </ligand>
</feature>
<feature type="binding site" evidence="1">
    <location>
        <begin position="236"/>
        <end position="237"/>
    </location>
    <ligand>
        <name>D-ribose 5-phosphate</name>
        <dbReference type="ChEBI" id="CHEBI:78346"/>
    </ligand>
</feature>